<keyword id="KW-0687">Ribonucleoprotein</keyword>
<keyword id="KW-0689">Ribosomal protein</keyword>
<sequence length="130" mass="14826">MAENQYYGTGRRKSSAARVFIKPGNGKIVINQRSLEQYFGRETARMVVRQPLELVDMVEKLDLYITVKGGGISGQAGAIRHGITRALMEYDESLRGELRKAGFVTRDARQVERKKVGLRKARRRPQFSKR</sequence>
<reference key="1">
    <citation type="journal article" date="2011" name="J. Bacteriol.">
        <title>Comparative genomics of 28 Salmonella enterica isolates: evidence for CRISPR-mediated adaptive sublineage evolution.</title>
        <authorList>
            <person name="Fricke W.F."/>
            <person name="Mammel M.K."/>
            <person name="McDermott P.F."/>
            <person name="Tartera C."/>
            <person name="White D.G."/>
            <person name="Leclerc J.E."/>
            <person name="Ravel J."/>
            <person name="Cebula T.A."/>
        </authorList>
    </citation>
    <scope>NUCLEOTIDE SEQUENCE [LARGE SCALE GENOMIC DNA]</scope>
    <source>
        <strain>SL476</strain>
    </source>
</reference>
<organism>
    <name type="scientific">Salmonella heidelberg (strain SL476)</name>
    <dbReference type="NCBI Taxonomy" id="454169"/>
    <lineage>
        <taxon>Bacteria</taxon>
        <taxon>Pseudomonadati</taxon>
        <taxon>Pseudomonadota</taxon>
        <taxon>Gammaproteobacteria</taxon>
        <taxon>Enterobacterales</taxon>
        <taxon>Enterobacteriaceae</taxon>
        <taxon>Salmonella</taxon>
    </lineage>
</organism>
<proteinExistence type="inferred from homology"/>
<comment type="similarity">
    <text evidence="1">Belongs to the universal ribosomal protein uS9 family.</text>
</comment>
<evidence type="ECO:0000255" key="1">
    <source>
        <dbReference type="HAMAP-Rule" id="MF_00532"/>
    </source>
</evidence>
<evidence type="ECO:0000305" key="2"/>
<protein>
    <recommendedName>
        <fullName evidence="1">Small ribosomal subunit protein uS9</fullName>
    </recommendedName>
    <alternativeName>
        <fullName evidence="2">30S ribosomal protein S9</fullName>
    </alternativeName>
</protein>
<dbReference type="EMBL" id="CP001120">
    <property type="protein sequence ID" value="ACF68573.1"/>
    <property type="molecule type" value="Genomic_DNA"/>
</dbReference>
<dbReference type="RefSeq" id="WP_000829815.1">
    <property type="nucleotide sequence ID" value="NC_011083.1"/>
</dbReference>
<dbReference type="SMR" id="B4TJR8"/>
<dbReference type="GeneID" id="97393262"/>
<dbReference type="KEGG" id="seh:SeHA_C3642"/>
<dbReference type="HOGENOM" id="CLU_046483_2_1_6"/>
<dbReference type="Proteomes" id="UP000001866">
    <property type="component" value="Chromosome"/>
</dbReference>
<dbReference type="GO" id="GO:0022627">
    <property type="term" value="C:cytosolic small ribosomal subunit"/>
    <property type="evidence" value="ECO:0007669"/>
    <property type="project" value="TreeGrafter"/>
</dbReference>
<dbReference type="GO" id="GO:0003723">
    <property type="term" value="F:RNA binding"/>
    <property type="evidence" value="ECO:0007669"/>
    <property type="project" value="TreeGrafter"/>
</dbReference>
<dbReference type="GO" id="GO:0003735">
    <property type="term" value="F:structural constituent of ribosome"/>
    <property type="evidence" value="ECO:0007669"/>
    <property type="project" value="InterPro"/>
</dbReference>
<dbReference type="GO" id="GO:0006412">
    <property type="term" value="P:translation"/>
    <property type="evidence" value="ECO:0007669"/>
    <property type="project" value="UniProtKB-UniRule"/>
</dbReference>
<dbReference type="FunFam" id="3.30.230.10:FF:000001">
    <property type="entry name" value="30S ribosomal protein S9"/>
    <property type="match status" value="1"/>
</dbReference>
<dbReference type="Gene3D" id="3.30.230.10">
    <property type="match status" value="1"/>
</dbReference>
<dbReference type="HAMAP" id="MF_00532_B">
    <property type="entry name" value="Ribosomal_uS9_B"/>
    <property type="match status" value="1"/>
</dbReference>
<dbReference type="InterPro" id="IPR020568">
    <property type="entry name" value="Ribosomal_Su5_D2-typ_SF"/>
</dbReference>
<dbReference type="InterPro" id="IPR000754">
    <property type="entry name" value="Ribosomal_uS9"/>
</dbReference>
<dbReference type="InterPro" id="IPR023035">
    <property type="entry name" value="Ribosomal_uS9_bac/plastid"/>
</dbReference>
<dbReference type="InterPro" id="IPR020574">
    <property type="entry name" value="Ribosomal_uS9_CS"/>
</dbReference>
<dbReference type="InterPro" id="IPR014721">
    <property type="entry name" value="Ribsml_uS5_D2-typ_fold_subgr"/>
</dbReference>
<dbReference type="NCBIfam" id="NF001099">
    <property type="entry name" value="PRK00132.1"/>
    <property type="match status" value="1"/>
</dbReference>
<dbReference type="PANTHER" id="PTHR21569">
    <property type="entry name" value="RIBOSOMAL PROTEIN S9"/>
    <property type="match status" value="1"/>
</dbReference>
<dbReference type="PANTHER" id="PTHR21569:SF1">
    <property type="entry name" value="SMALL RIBOSOMAL SUBUNIT PROTEIN US9M"/>
    <property type="match status" value="1"/>
</dbReference>
<dbReference type="Pfam" id="PF00380">
    <property type="entry name" value="Ribosomal_S9"/>
    <property type="match status" value="1"/>
</dbReference>
<dbReference type="SUPFAM" id="SSF54211">
    <property type="entry name" value="Ribosomal protein S5 domain 2-like"/>
    <property type="match status" value="1"/>
</dbReference>
<dbReference type="PROSITE" id="PS00360">
    <property type="entry name" value="RIBOSOMAL_S9"/>
    <property type="match status" value="1"/>
</dbReference>
<accession>B4TJR8</accession>
<feature type="chain" id="PRO_1000128170" description="Small ribosomal subunit protein uS9">
    <location>
        <begin position="1"/>
        <end position="130"/>
    </location>
</feature>
<name>RS9_SALHS</name>
<gene>
    <name evidence="1" type="primary">rpsI</name>
    <name type="ordered locus">SeHA_C3642</name>
</gene>